<keyword id="KW-0963">Cytoplasm</keyword>
<keyword id="KW-0903">Direct protein sequencing</keyword>
<keyword id="KW-0372">Hormone</keyword>
<keyword id="KW-1185">Reference proteome</keyword>
<keyword id="KW-0677">Repeat</keyword>
<feature type="propeptide" id="PRO_0000022461" evidence="3">
    <location>
        <begin position="1"/>
        <end position="178"/>
    </location>
</feature>
<feature type="peptide" id="PRO_0000022462" description="Systemin">
    <location>
        <begin position="179"/>
        <end position="196"/>
    </location>
</feature>
<feature type="propeptide" id="PRO_0000022463">
    <location>
        <begin position="197"/>
        <end position="200"/>
    </location>
</feature>
<feature type="repeat" description="1; truncated">
    <location>
        <begin position="3"/>
        <end position="8"/>
    </location>
</feature>
<feature type="repeat" description="2">
    <location>
        <begin position="37"/>
        <end position="45"/>
    </location>
</feature>
<feature type="repeat" description="3">
    <location>
        <begin position="80"/>
        <end position="88"/>
    </location>
</feature>
<feature type="repeat" description="4">
    <location>
        <begin position="117"/>
        <end position="125"/>
    </location>
</feature>
<feature type="repeat" description="5">
    <location>
        <begin position="145"/>
        <end position="153"/>
    </location>
</feature>
<feature type="region of interest" description="Disordered" evidence="1">
    <location>
        <begin position="1"/>
        <end position="33"/>
    </location>
</feature>
<feature type="region of interest" description="Disordered" evidence="1">
    <location>
        <begin position="106"/>
        <end position="159"/>
    </location>
</feature>
<feature type="region of interest" description="Disordered" evidence="1">
    <location>
        <begin position="178"/>
        <end position="200"/>
    </location>
</feature>
<feature type="compositionally biased region" description="Basic and acidic residues" evidence="1">
    <location>
        <begin position="8"/>
        <end position="33"/>
    </location>
</feature>
<feature type="compositionally biased region" description="Basic and acidic residues" evidence="1">
    <location>
        <begin position="111"/>
        <end position="140"/>
    </location>
</feature>
<feature type="compositionally biased region" description="Basic and acidic residues" evidence="1">
    <location>
        <begin position="146"/>
        <end position="158"/>
    </location>
</feature>
<dbReference type="EMBL" id="M84800">
    <property type="protein sequence ID" value="AAA34182.1"/>
    <property type="molecule type" value="Genomic_DNA"/>
</dbReference>
<dbReference type="EMBL" id="M84801">
    <property type="protein sequence ID" value="AAA34184.1"/>
    <property type="molecule type" value="mRNA"/>
</dbReference>
<dbReference type="PIR" id="T07149">
    <property type="entry name" value="T07149"/>
</dbReference>
<dbReference type="RefSeq" id="NP_001296096.1">
    <property type="nucleotide sequence ID" value="NM_001309167.1"/>
</dbReference>
<dbReference type="SMR" id="P27058"/>
<dbReference type="PaxDb" id="4081-Solyc05g051750.2.1"/>
<dbReference type="GeneID" id="543989"/>
<dbReference type="KEGG" id="sly:543989"/>
<dbReference type="InParanoid" id="P27058"/>
<dbReference type="OrthoDB" id="1298850at2759"/>
<dbReference type="Proteomes" id="UP000004994">
    <property type="component" value="Unplaced"/>
</dbReference>
<dbReference type="ExpressionAtlas" id="P27058">
    <property type="expression patterns" value="baseline and differential"/>
</dbReference>
<dbReference type="GO" id="GO:0005737">
    <property type="term" value="C:cytoplasm"/>
    <property type="evidence" value="ECO:0007669"/>
    <property type="project" value="UniProtKB-SubCell"/>
</dbReference>
<dbReference type="GO" id="GO:0005179">
    <property type="term" value="F:hormone activity"/>
    <property type="evidence" value="ECO:0007669"/>
    <property type="project" value="UniProtKB-KW"/>
</dbReference>
<dbReference type="DisProt" id="DP01969"/>
<dbReference type="InterPro" id="IPR009966">
    <property type="entry name" value="Prosystemin/Systemin"/>
</dbReference>
<dbReference type="Pfam" id="PF07376">
    <property type="entry name" value="Prosystemin"/>
    <property type="match status" value="1"/>
</dbReference>
<name>SYST_SOLLC</name>
<accession>P27058</accession>
<protein>
    <recommendedName>
        <fullName>Systemin</fullName>
    </recommendedName>
</protein>
<proteinExistence type="evidence at protein level"/>
<evidence type="ECO:0000256" key="1">
    <source>
        <dbReference type="SAM" id="MobiDB-lite"/>
    </source>
</evidence>
<evidence type="ECO:0000269" key="2">
    <source>
    </source>
</evidence>
<evidence type="ECO:0000269" key="3">
    <source ref="2"/>
</evidence>
<comment type="function">
    <text evidence="2">Activates a lipid-based signal transduction pathway in which linolenic acid is converted to jasmonic acid, a potent activator of defense gene transcription, including proteinase inhibitor.</text>
</comment>
<comment type="subcellular location">
    <subcellularLocation>
        <location>Cytoplasm</location>
    </subcellularLocation>
</comment>
<comment type="tissue specificity">
    <text>All organs except the roots. Transported out of wounds to distal tissues.</text>
</comment>
<comment type="induction">
    <text>By wounding; in leaves.</text>
</comment>
<sequence length="200" mass="22999">MGTPSYDIKNKGDDMQEEPKVKLHHEKGGDEKEKIIEKETPSQDINNKDTISSYVLRDDTQEIPKMEHEEGGYVKEKIVEKETISQYIIKIEGDDDAQEKLKVEYEEEEYEKEKIVEKETPSQDINNKGDDAQEKPKVEHEEGDDKETPSQDIIKMEGEGALEITKVVCEKIIVREDLAVQSKPPSKRDPPKMQTDNNKL</sequence>
<organism>
    <name type="scientific">Solanum lycopersicum</name>
    <name type="common">Tomato</name>
    <name type="synonym">Lycopersicon esculentum</name>
    <dbReference type="NCBI Taxonomy" id="4081"/>
    <lineage>
        <taxon>Eukaryota</taxon>
        <taxon>Viridiplantae</taxon>
        <taxon>Streptophyta</taxon>
        <taxon>Embryophyta</taxon>
        <taxon>Tracheophyta</taxon>
        <taxon>Spermatophyta</taxon>
        <taxon>Magnoliopsida</taxon>
        <taxon>eudicotyledons</taxon>
        <taxon>Gunneridae</taxon>
        <taxon>Pentapetalae</taxon>
        <taxon>asterids</taxon>
        <taxon>lamiids</taxon>
        <taxon>Solanales</taxon>
        <taxon>Solanaceae</taxon>
        <taxon>Solanoideae</taxon>
        <taxon>Solaneae</taxon>
        <taxon>Solanum</taxon>
        <taxon>Solanum subgen. Lycopersicon</taxon>
    </lineage>
</organism>
<reference key="1">
    <citation type="journal article" date="1992" name="Science">
        <title>Structure, expression, and antisense inhibition of the systemin precursor gene.</title>
        <authorList>
            <person name="McGurl B."/>
            <person name="Pearce G."/>
            <person name="Orozco-Cardenas M."/>
            <person name="Ryan C.A."/>
        </authorList>
    </citation>
    <scope>NUCLEOTIDE SEQUENCE [GENOMIC DNA / MRNA]</scope>
    <source>
        <tissue>Leaf</tissue>
    </source>
</reference>
<reference key="2">
    <citation type="journal article" date="1991" name="Science">
        <title>A polypeptide from tomato leaves induces wound-inducible proteinase inhibitor proteins.</title>
        <authorList>
            <person name="Pearce G."/>
            <person name="Strydom D."/>
            <person name="Johnson S."/>
            <person name="Ryan C.A."/>
        </authorList>
    </citation>
    <scope>PROTEIN SEQUENCE OF 179-196</scope>
</reference>
<reference key="3">
    <citation type="journal article" date="2000" name="Biochim. Biophys. Acta">
        <title>The systemin signaling pathway: differential activation of plant defensive genes.</title>
        <authorList>
            <person name="Ryan C.A."/>
        </authorList>
    </citation>
    <scope>FUNCTION</scope>
</reference>